<sequence length="389" mass="44123">MANWPRVSPLAYVALGVLLGLTISIISQTGTTTYDAASRIAILRANRGDPQVDEHDHAHGNDPHGDEEVDDHHANFAPVQFHSNNSSHSHDGESLIADEVAKKVRVFCWILTGKQNHDKRAKHVKATWAKRCNKYVFMSSEEDAELPAINLNVSEGRDYLWAKTKGAFKYIYDHHLNDYDWFLKADDDTYVVMENLRFMLLAHSPDEPIHFGCKFKPFTQGGYHSGGAGYVLSREALKKFIEVALPDKSLCSQNHGGAEDAEMGKCLEKVGVKAGDSRDADGHHRFMPFVPEHHLSPGHVDPKFWFWQYTYYPMDQGPTCCSDYAVSFHYVNPNLMYVLEYLIYHLKPFGIDRAIRVPKNETIIHTAYSISRSERGQDDAFRDRPEVAV</sequence>
<proteinExistence type="evidence at protein level"/>
<name>C1GLT_CAEEL</name>
<gene>
    <name type="ORF">C38H2.2</name>
</gene>
<reference key="1">
    <citation type="journal article" date="2002" name="J. Biol. Chem.">
        <title>Cloning and expression of human core 1 beta1,3-galactosyltransferase.</title>
        <authorList>
            <person name="Ju T."/>
            <person name="Brewer K."/>
            <person name="D'Souza A."/>
            <person name="Cummings R.D."/>
            <person name="Canfield W.M."/>
        </authorList>
    </citation>
    <scope>NUCLEOTIDE SEQUENCE [MRNA]</scope>
</reference>
<reference key="2">
    <citation type="journal article" date="1998" name="Science">
        <title>Genome sequence of the nematode C. elegans: a platform for investigating biology.</title>
        <authorList>
            <consortium name="The C. elegans sequencing consortium"/>
        </authorList>
    </citation>
    <scope>NUCLEOTIDE SEQUENCE [LARGE SCALE GENOMIC DNA]</scope>
    <scope>ALTERNATIVE SPLICING</scope>
    <source>
        <strain>Bristol N2</strain>
    </source>
</reference>
<reference key="3">
    <citation type="journal article" date="2006" name="Glycobiology">
        <title>Identification of core 1 O-glycan T-synthase from Caenorhabditis elegans.</title>
        <authorList>
            <person name="Ju T."/>
            <person name="Zheng Q."/>
            <person name="Cummings R.D."/>
        </authorList>
    </citation>
    <scope>FUNCTION</scope>
    <scope>CATALYTIC ACTIVITY</scope>
    <scope>PATHWAY</scope>
    <scope>TISSUE SPECIFICITY</scope>
</reference>
<comment type="function">
    <text evidence="6">Glycosyltransferase that generates the core 1 O-glycan Gal-beta1-3GalNAc-alpha1-Ser/Thr (T antigen), which is a precursor for many extended O-glycans in glycoproteins.</text>
</comment>
<comment type="catalytic activity">
    <reaction evidence="6">
        <text>an N-acetyl-alpha-D-galactosaminyl derivative + UDP-alpha-D-galactose = a beta-D-galactosyl-(1-&gt;3)-N-acetyl-alpha-D-galactosaminyl derivative + UDP + H(+)</text>
        <dbReference type="Rhea" id="RHEA:15621"/>
        <dbReference type="ChEBI" id="CHEBI:15378"/>
        <dbReference type="ChEBI" id="CHEBI:28257"/>
        <dbReference type="ChEBI" id="CHEBI:58223"/>
        <dbReference type="ChEBI" id="CHEBI:66914"/>
        <dbReference type="ChEBI" id="CHEBI:133470"/>
        <dbReference type="EC" id="2.4.1.122"/>
    </reaction>
</comment>
<comment type="cofactor">
    <cofactor evidence="3">
        <name>Mn(2+)</name>
        <dbReference type="ChEBI" id="CHEBI:29035"/>
    </cofactor>
</comment>
<comment type="pathway">
    <text evidence="6">Protein modification; protein glycosylation.</text>
</comment>
<comment type="subunit">
    <text evidence="3">Homodimer; disulfide-linked.</text>
</comment>
<comment type="subcellular location">
    <subcellularLocation>
        <location evidence="3">Membrane</location>
        <topology evidence="1">Single-pass type II membrane protein</topology>
    </subcellularLocation>
</comment>
<comment type="tissue specificity">
    <text evidence="6">Ubiquitously expressed throughout development. Present in all cells.</text>
</comment>
<comment type="similarity">
    <text evidence="7">Belongs to the glycosyltransferase 31 family. Beta3-Gal-T subfamily.</text>
</comment>
<evidence type="ECO:0000250" key="1"/>
<evidence type="ECO:0000250" key="2">
    <source>
        <dbReference type="UniProtKB" id="Q7K237"/>
    </source>
</evidence>
<evidence type="ECO:0000250" key="3">
    <source>
        <dbReference type="UniProtKB" id="Q9JJ05"/>
    </source>
</evidence>
<evidence type="ECO:0000255" key="4"/>
<evidence type="ECO:0000256" key="5">
    <source>
        <dbReference type="SAM" id="MobiDB-lite"/>
    </source>
</evidence>
<evidence type="ECO:0000269" key="6">
    <source>
    </source>
</evidence>
<evidence type="ECO:0000305" key="7"/>
<keyword id="KW-1015">Disulfide bond</keyword>
<keyword id="KW-0325">Glycoprotein</keyword>
<keyword id="KW-0328">Glycosyltransferase</keyword>
<keyword id="KW-0464">Manganese</keyword>
<keyword id="KW-0472">Membrane</keyword>
<keyword id="KW-0479">Metal-binding</keyword>
<keyword id="KW-0547">Nucleotide-binding</keyword>
<keyword id="KW-1185">Reference proteome</keyword>
<keyword id="KW-0735">Signal-anchor</keyword>
<keyword id="KW-0808">Transferase</keyword>
<keyword id="KW-0812">Transmembrane</keyword>
<keyword id="KW-1133">Transmembrane helix</keyword>
<protein>
    <recommendedName>
        <fullName>Glycoprotein-N-acetylgalactosamine 3-beta-galactosyltransferase 1</fullName>
        <ecNumber evidence="6">2.4.1.122</ecNumber>
    </recommendedName>
    <alternativeName>
        <fullName>Core 1 O-glycan T-synthase</fullName>
        <shortName>Ce-T-synthase</shortName>
    </alternativeName>
    <alternativeName>
        <fullName>Core 1 UDP-galactose:N-acetylgalactosamine-alpha-R beta 1,3-galactosyltransferase 1</fullName>
    </alternativeName>
    <alternativeName>
        <fullName>Core 1 beta1,3-galactosyltransferase 1</fullName>
        <shortName>C1GalT1</shortName>
        <shortName>Core 1 beta3-Gal-T1</shortName>
    </alternativeName>
</protein>
<dbReference type="EC" id="2.4.1.122" evidence="6"/>
<dbReference type="EMBL" id="AF269063">
    <property type="protein sequence ID" value="AAG36940.1"/>
    <property type="molecule type" value="mRNA"/>
</dbReference>
<dbReference type="EMBL" id="Z35641">
    <property type="protein sequence ID" value="CAA84707.2"/>
    <property type="molecule type" value="Genomic_DNA"/>
</dbReference>
<dbReference type="PIR" id="T19837">
    <property type="entry name" value="T19837"/>
</dbReference>
<dbReference type="RefSeq" id="NP_499293.2">
    <property type="nucleotide sequence ID" value="NM_066892.8"/>
</dbReference>
<dbReference type="SMR" id="Q18515"/>
<dbReference type="BioGRID" id="41648">
    <property type="interactions" value="4"/>
</dbReference>
<dbReference type="FunCoup" id="Q18515">
    <property type="interactions" value="997"/>
</dbReference>
<dbReference type="STRING" id="6239.C38H2.2.2"/>
<dbReference type="CAZy" id="GT31">
    <property type="family name" value="Glycosyltransferase Family 31"/>
</dbReference>
<dbReference type="PaxDb" id="6239-C38H2.2"/>
<dbReference type="PeptideAtlas" id="Q18515"/>
<dbReference type="EnsemblMetazoa" id="C38H2.2.1">
    <property type="protein sequence ID" value="C38H2.2.1"/>
    <property type="gene ID" value="WBGene00008019"/>
</dbReference>
<dbReference type="GeneID" id="176455"/>
<dbReference type="KEGG" id="cel:CELE_C38H2.2"/>
<dbReference type="UCSC" id="C38H2.2">
    <property type="organism name" value="c. elegans"/>
</dbReference>
<dbReference type="AGR" id="WB:WBGene00008019"/>
<dbReference type="CTD" id="176455"/>
<dbReference type="WormBase" id="C38H2.2">
    <property type="protein sequence ID" value="CE32602"/>
    <property type="gene ID" value="WBGene00008019"/>
</dbReference>
<dbReference type="eggNOG" id="KOG2246">
    <property type="taxonomic scope" value="Eukaryota"/>
</dbReference>
<dbReference type="GeneTree" id="ENSGT00940000155000"/>
<dbReference type="HOGENOM" id="CLU_035857_0_0_1"/>
<dbReference type="InParanoid" id="Q18515"/>
<dbReference type="OMA" id="WLLSKHD"/>
<dbReference type="OrthoDB" id="414175at2759"/>
<dbReference type="PhylomeDB" id="Q18515"/>
<dbReference type="BRENDA" id="2.4.1.122">
    <property type="organism ID" value="1045"/>
</dbReference>
<dbReference type="Reactome" id="R-CEL-913709">
    <property type="pathway name" value="O-linked glycosylation of mucins"/>
</dbReference>
<dbReference type="UniPathway" id="UPA00378"/>
<dbReference type="PRO" id="PR:Q18515"/>
<dbReference type="Proteomes" id="UP000001940">
    <property type="component" value="Chromosome III"/>
</dbReference>
<dbReference type="Bgee" id="WBGene00008019">
    <property type="expression patterns" value="Expressed in pharyngeal muscle cell (C elegans) and 3 other cell types or tissues"/>
</dbReference>
<dbReference type="GO" id="GO:0016020">
    <property type="term" value="C:membrane"/>
    <property type="evidence" value="ECO:0007669"/>
    <property type="project" value="UniProtKB-SubCell"/>
</dbReference>
<dbReference type="GO" id="GO:0016263">
    <property type="term" value="F:glycoprotein-N-acetylgalactosamine 3-beta-galactosyltransferase activity"/>
    <property type="evidence" value="ECO:0000318"/>
    <property type="project" value="GO_Central"/>
</dbReference>
<dbReference type="GO" id="GO:0046872">
    <property type="term" value="F:metal ion binding"/>
    <property type="evidence" value="ECO:0007669"/>
    <property type="project" value="UniProtKB-KW"/>
</dbReference>
<dbReference type="GO" id="GO:0000166">
    <property type="term" value="F:nucleotide binding"/>
    <property type="evidence" value="ECO:0007669"/>
    <property type="project" value="UniProtKB-KW"/>
</dbReference>
<dbReference type="GO" id="GO:0006486">
    <property type="term" value="P:protein glycosylation"/>
    <property type="evidence" value="ECO:0007669"/>
    <property type="project" value="UniProtKB-UniPathway"/>
</dbReference>
<dbReference type="FunFam" id="3.90.550.50:FF:000017">
    <property type="entry name" value="Glycoprotein-N-acetylgalactosamine 3-beta-galactosyltransferase 1"/>
    <property type="match status" value="1"/>
</dbReference>
<dbReference type="Gene3D" id="3.90.550.50">
    <property type="match status" value="1"/>
</dbReference>
<dbReference type="InterPro" id="IPR026050">
    <property type="entry name" value="C1GALT1/C1GALT1_chp1"/>
</dbReference>
<dbReference type="InterPro" id="IPR003378">
    <property type="entry name" value="Fringe-like_glycosylTrfase"/>
</dbReference>
<dbReference type="PANTHER" id="PTHR23033">
    <property type="entry name" value="BETA1,3-GALACTOSYLTRANSFERASE"/>
    <property type="match status" value="1"/>
</dbReference>
<dbReference type="PANTHER" id="PTHR23033:SF14">
    <property type="entry name" value="GLYCOPROTEIN-N-ACETYLGALACTOSAMINE 3-BETA-GALACTOSYLTRANSFERASE 1-RELATED"/>
    <property type="match status" value="1"/>
</dbReference>
<dbReference type="Pfam" id="PF02434">
    <property type="entry name" value="Fringe"/>
    <property type="match status" value="1"/>
</dbReference>
<feature type="chain" id="PRO_0000285071" description="Glycoprotein-N-acetylgalactosamine 3-beta-galactosyltransferase 1">
    <location>
        <begin position="1"/>
        <end position="389"/>
    </location>
</feature>
<feature type="topological domain" description="Cytoplasmic" evidence="4">
    <location>
        <begin position="1"/>
        <end position="6"/>
    </location>
</feature>
<feature type="transmembrane region" description="Helical; Signal-anchor for type II membrane protein" evidence="4">
    <location>
        <begin position="7"/>
        <end position="27"/>
    </location>
</feature>
<feature type="topological domain" description="Lumenal" evidence="4">
    <location>
        <begin position="28"/>
        <end position="389"/>
    </location>
</feature>
<feature type="region of interest" description="Disordered" evidence="5">
    <location>
        <begin position="49"/>
        <end position="71"/>
    </location>
</feature>
<feature type="binding site" evidence="2">
    <location>
        <position position="155"/>
    </location>
    <ligand>
        <name>UDP</name>
        <dbReference type="ChEBI" id="CHEBI:58223"/>
    </ligand>
</feature>
<feature type="binding site" evidence="2">
    <location>
        <position position="156"/>
    </location>
    <ligand>
        <name>UDP</name>
        <dbReference type="ChEBI" id="CHEBI:58223"/>
    </ligand>
</feature>
<feature type="binding site" evidence="2">
    <location>
        <position position="157"/>
    </location>
    <ligand>
        <name>UDP</name>
        <dbReference type="ChEBI" id="CHEBI:58223"/>
    </ligand>
</feature>
<feature type="binding site" evidence="2">
    <location>
        <position position="163"/>
    </location>
    <ligand>
        <name>UDP</name>
        <dbReference type="ChEBI" id="CHEBI:58223"/>
    </ligand>
</feature>
<feature type="binding site" evidence="2">
    <location>
        <position position="186"/>
    </location>
    <ligand>
        <name>Mn(2+)</name>
        <dbReference type="ChEBI" id="CHEBI:29035"/>
    </ligand>
</feature>
<feature type="binding site" evidence="2">
    <location>
        <position position="186"/>
    </location>
    <ligand>
        <name>UDP</name>
        <dbReference type="ChEBI" id="CHEBI:58223"/>
    </ligand>
</feature>
<feature type="binding site" evidence="2">
    <location>
        <position position="188"/>
    </location>
    <ligand>
        <name>Mn(2+)</name>
        <dbReference type="ChEBI" id="CHEBI:29035"/>
    </ligand>
</feature>
<feature type="binding site" evidence="2">
    <location>
        <position position="305"/>
    </location>
    <ligand>
        <name>a glycoprotein</name>
        <dbReference type="ChEBI" id="CHEBI:17089"/>
    </ligand>
</feature>
<feature type="binding site" evidence="2">
    <location>
        <position position="329"/>
    </location>
    <ligand>
        <name>Mn(2+)</name>
        <dbReference type="ChEBI" id="CHEBI:29035"/>
    </ligand>
</feature>
<feature type="binding site" evidence="2">
    <location>
        <position position="329"/>
    </location>
    <ligand>
        <name>UDP</name>
        <dbReference type="ChEBI" id="CHEBI:58223"/>
    </ligand>
</feature>
<feature type="binding site" evidence="2">
    <location>
        <position position="330"/>
    </location>
    <ligand>
        <name>UDP</name>
        <dbReference type="ChEBI" id="CHEBI:58223"/>
    </ligand>
</feature>
<feature type="glycosylation site" description="N-linked (GlcNAc...) asparagine" evidence="4">
    <location>
        <position position="84"/>
    </location>
</feature>
<feature type="glycosylation site" description="N-linked (GlcNAc...) asparagine" evidence="4">
    <location>
        <position position="85"/>
    </location>
</feature>
<feature type="glycosylation site" description="N-linked (GlcNAc...) asparagine" evidence="4">
    <location>
        <position position="152"/>
    </location>
</feature>
<feature type="glycosylation site" description="N-linked (GlcNAc...) asparagine" evidence="4">
    <location>
        <position position="360"/>
    </location>
</feature>
<feature type="disulfide bond" evidence="2">
    <location>
        <begin position="108"/>
        <end position="132"/>
    </location>
</feature>
<feature type="disulfide bond" evidence="2">
    <location>
        <begin position="251"/>
        <end position="266"/>
    </location>
</feature>
<feature type="disulfide bond" evidence="2">
    <location>
        <begin position="320"/>
        <end position="321"/>
    </location>
</feature>
<organism>
    <name type="scientific">Caenorhabditis elegans</name>
    <dbReference type="NCBI Taxonomy" id="6239"/>
    <lineage>
        <taxon>Eukaryota</taxon>
        <taxon>Metazoa</taxon>
        <taxon>Ecdysozoa</taxon>
        <taxon>Nematoda</taxon>
        <taxon>Chromadorea</taxon>
        <taxon>Rhabditida</taxon>
        <taxon>Rhabditina</taxon>
        <taxon>Rhabditomorpha</taxon>
        <taxon>Rhabditoidea</taxon>
        <taxon>Rhabditidae</taxon>
        <taxon>Peloderinae</taxon>
        <taxon>Caenorhabditis</taxon>
    </lineage>
</organism>
<accession>Q18515</accession>
<accession>Q9GQC5</accession>